<reference key="1">
    <citation type="journal article" date="2002" name="Lancet">
        <title>Genome and virulence determinants of high virulence community-acquired MRSA.</title>
        <authorList>
            <person name="Baba T."/>
            <person name="Takeuchi F."/>
            <person name="Kuroda M."/>
            <person name="Yuzawa H."/>
            <person name="Aoki K."/>
            <person name="Oguchi A."/>
            <person name="Nagai Y."/>
            <person name="Iwama N."/>
            <person name="Asano K."/>
            <person name="Naimi T."/>
            <person name="Kuroda H."/>
            <person name="Cui L."/>
            <person name="Yamamoto K."/>
            <person name="Hiramatsu K."/>
        </authorList>
    </citation>
    <scope>NUCLEOTIDE SEQUENCE [LARGE SCALE GENOMIC DNA]</scope>
    <source>
        <strain>MW2</strain>
    </source>
</reference>
<name>SECA1_STAAW</name>
<accession>Q7A1G4</accession>
<evidence type="ECO:0000255" key="1">
    <source>
        <dbReference type="HAMAP-Rule" id="MF_01382"/>
    </source>
</evidence>
<evidence type="ECO:0000256" key="2">
    <source>
        <dbReference type="SAM" id="MobiDB-lite"/>
    </source>
</evidence>
<comment type="function">
    <text evidence="1">Part of the Sec protein translocase complex. Interacts with the SecYEG preprotein conducting channel. Has a central role in coupling the hydrolysis of ATP to the transfer of proteins into and across the cell membrane, serving as an ATP-driven molecular motor driving the stepwise translocation of polypeptide chains across the membrane.</text>
</comment>
<comment type="catalytic activity">
    <reaction evidence="1">
        <text>ATP + H2O + cellular proteinSide 1 = ADP + phosphate + cellular proteinSide 2.</text>
        <dbReference type="EC" id="7.4.2.8"/>
    </reaction>
</comment>
<comment type="cofactor">
    <cofactor evidence="1">
        <name>Zn(2+)</name>
        <dbReference type="ChEBI" id="CHEBI:29105"/>
    </cofactor>
    <text evidence="1">May bind 1 zinc ion per subunit.</text>
</comment>
<comment type="subunit">
    <text evidence="1">Monomer and homodimer. Part of the essential Sec protein translocation apparatus which comprises SecA, SecYEG and auxiliary proteins SecDF. Other proteins may also be involved.</text>
</comment>
<comment type="subcellular location">
    <subcellularLocation>
        <location evidence="1">Cell membrane</location>
        <topology evidence="1">Peripheral membrane protein</topology>
        <orientation evidence="1">Cytoplasmic side</orientation>
    </subcellularLocation>
    <subcellularLocation>
        <location evidence="1">Cytoplasm</location>
    </subcellularLocation>
    <text evidence="1">Distribution is 50-50.</text>
</comment>
<comment type="similarity">
    <text evidence="1">Belongs to the SecA family.</text>
</comment>
<dbReference type="EC" id="7.4.2.8" evidence="1"/>
<dbReference type="EMBL" id="BA000033">
    <property type="protein sequence ID" value="BAB94580.1"/>
    <property type="molecule type" value="Genomic_DNA"/>
</dbReference>
<dbReference type="SMR" id="Q7A1G4"/>
<dbReference type="KEGG" id="sam:MW0715"/>
<dbReference type="HOGENOM" id="CLU_005314_3_0_9"/>
<dbReference type="GO" id="GO:0031522">
    <property type="term" value="C:cell envelope Sec protein transport complex"/>
    <property type="evidence" value="ECO:0007669"/>
    <property type="project" value="TreeGrafter"/>
</dbReference>
<dbReference type="GO" id="GO:0005829">
    <property type="term" value="C:cytosol"/>
    <property type="evidence" value="ECO:0007669"/>
    <property type="project" value="TreeGrafter"/>
</dbReference>
<dbReference type="GO" id="GO:0005886">
    <property type="term" value="C:plasma membrane"/>
    <property type="evidence" value="ECO:0007669"/>
    <property type="project" value="UniProtKB-SubCell"/>
</dbReference>
<dbReference type="GO" id="GO:0005524">
    <property type="term" value="F:ATP binding"/>
    <property type="evidence" value="ECO:0007669"/>
    <property type="project" value="UniProtKB-UniRule"/>
</dbReference>
<dbReference type="GO" id="GO:0046872">
    <property type="term" value="F:metal ion binding"/>
    <property type="evidence" value="ECO:0007669"/>
    <property type="project" value="UniProtKB-KW"/>
</dbReference>
<dbReference type="GO" id="GO:0008564">
    <property type="term" value="F:protein-exporting ATPase activity"/>
    <property type="evidence" value="ECO:0007669"/>
    <property type="project" value="UniProtKB-EC"/>
</dbReference>
<dbReference type="GO" id="GO:0065002">
    <property type="term" value="P:intracellular protein transmembrane transport"/>
    <property type="evidence" value="ECO:0007669"/>
    <property type="project" value="UniProtKB-UniRule"/>
</dbReference>
<dbReference type="GO" id="GO:0017038">
    <property type="term" value="P:protein import"/>
    <property type="evidence" value="ECO:0007669"/>
    <property type="project" value="InterPro"/>
</dbReference>
<dbReference type="GO" id="GO:0006605">
    <property type="term" value="P:protein targeting"/>
    <property type="evidence" value="ECO:0007669"/>
    <property type="project" value="UniProtKB-UniRule"/>
</dbReference>
<dbReference type="GO" id="GO:0043952">
    <property type="term" value="P:protein transport by the Sec complex"/>
    <property type="evidence" value="ECO:0007669"/>
    <property type="project" value="TreeGrafter"/>
</dbReference>
<dbReference type="CDD" id="cd17928">
    <property type="entry name" value="DEXDc_SecA"/>
    <property type="match status" value="1"/>
</dbReference>
<dbReference type="CDD" id="cd18803">
    <property type="entry name" value="SF2_C_secA"/>
    <property type="match status" value="1"/>
</dbReference>
<dbReference type="FunFam" id="3.40.50.300:FF:000694">
    <property type="entry name" value="Preprotein translocase subunit SecA"/>
    <property type="match status" value="1"/>
</dbReference>
<dbReference type="FunFam" id="3.90.1440.10:FF:000002">
    <property type="entry name" value="Protein translocase subunit SecA"/>
    <property type="match status" value="1"/>
</dbReference>
<dbReference type="Gene3D" id="1.10.3060.10">
    <property type="entry name" value="Helical scaffold and wing domains of SecA"/>
    <property type="match status" value="1"/>
</dbReference>
<dbReference type="Gene3D" id="3.40.50.300">
    <property type="entry name" value="P-loop containing nucleotide triphosphate hydrolases"/>
    <property type="match status" value="2"/>
</dbReference>
<dbReference type="Gene3D" id="3.90.1440.10">
    <property type="entry name" value="SecA, preprotein cross-linking domain"/>
    <property type="match status" value="1"/>
</dbReference>
<dbReference type="HAMAP" id="MF_01382">
    <property type="entry name" value="SecA"/>
    <property type="match status" value="1"/>
</dbReference>
<dbReference type="InterPro" id="IPR014001">
    <property type="entry name" value="Helicase_ATP-bd"/>
</dbReference>
<dbReference type="InterPro" id="IPR001650">
    <property type="entry name" value="Helicase_C-like"/>
</dbReference>
<dbReference type="InterPro" id="IPR027417">
    <property type="entry name" value="P-loop_NTPase"/>
</dbReference>
<dbReference type="InterPro" id="IPR004027">
    <property type="entry name" value="SEC_C_motif"/>
</dbReference>
<dbReference type="InterPro" id="IPR000185">
    <property type="entry name" value="SecA"/>
</dbReference>
<dbReference type="InterPro" id="IPR020937">
    <property type="entry name" value="SecA_CS"/>
</dbReference>
<dbReference type="InterPro" id="IPR011115">
    <property type="entry name" value="SecA_DEAD"/>
</dbReference>
<dbReference type="InterPro" id="IPR014018">
    <property type="entry name" value="SecA_motor_DEAD"/>
</dbReference>
<dbReference type="InterPro" id="IPR011130">
    <property type="entry name" value="SecA_preprotein_X-link_dom"/>
</dbReference>
<dbReference type="InterPro" id="IPR044722">
    <property type="entry name" value="SecA_SF2_C"/>
</dbReference>
<dbReference type="InterPro" id="IPR011116">
    <property type="entry name" value="SecA_Wing/Scaffold"/>
</dbReference>
<dbReference type="InterPro" id="IPR036266">
    <property type="entry name" value="SecA_Wing/Scaffold_sf"/>
</dbReference>
<dbReference type="InterPro" id="IPR036670">
    <property type="entry name" value="SecA_X-link_sf"/>
</dbReference>
<dbReference type="NCBIfam" id="NF006630">
    <property type="entry name" value="PRK09200.1"/>
    <property type="match status" value="1"/>
</dbReference>
<dbReference type="NCBIfam" id="TIGR00963">
    <property type="entry name" value="secA"/>
    <property type="match status" value="1"/>
</dbReference>
<dbReference type="PANTHER" id="PTHR30612:SF0">
    <property type="entry name" value="CHLOROPLAST PROTEIN-TRANSPORTING ATPASE"/>
    <property type="match status" value="1"/>
</dbReference>
<dbReference type="PANTHER" id="PTHR30612">
    <property type="entry name" value="SECA INNER MEMBRANE COMPONENT OF SEC PROTEIN SECRETION SYSTEM"/>
    <property type="match status" value="1"/>
</dbReference>
<dbReference type="Pfam" id="PF21090">
    <property type="entry name" value="P-loop_SecA"/>
    <property type="match status" value="1"/>
</dbReference>
<dbReference type="Pfam" id="PF02810">
    <property type="entry name" value="SEC-C"/>
    <property type="match status" value="1"/>
</dbReference>
<dbReference type="Pfam" id="PF07517">
    <property type="entry name" value="SecA_DEAD"/>
    <property type="match status" value="1"/>
</dbReference>
<dbReference type="Pfam" id="PF01043">
    <property type="entry name" value="SecA_PP_bind"/>
    <property type="match status" value="1"/>
</dbReference>
<dbReference type="Pfam" id="PF07516">
    <property type="entry name" value="SecA_SW"/>
    <property type="match status" value="1"/>
</dbReference>
<dbReference type="PRINTS" id="PR00906">
    <property type="entry name" value="SECA"/>
</dbReference>
<dbReference type="SMART" id="SM00957">
    <property type="entry name" value="SecA_DEAD"/>
    <property type="match status" value="1"/>
</dbReference>
<dbReference type="SMART" id="SM00958">
    <property type="entry name" value="SecA_PP_bind"/>
    <property type="match status" value="1"/>
</dbReference>
<dbReference type="SUPFAM" id="SSF81886">
    <property type="entry name" value="Helical scaffold and wing domains of SecA"/>
    <property type="match status" value="1"/>
</dbReference>
<dbReference type="SUPFAM" id="SSF52540">
    <property type="entry name" value="P-loop containing nucleoside triphosphate hydrolases"/>
    <property type="match status" value="2"/>
</dbReference>
<dbReference type="SUPFAM" id="SSF81767">
    <property type="entry name" value="Pre-protein crosslinking domain of SecA"/>
    <property type="match status" value="1"/>
</dbReference>
<dbReference type="PROSITE" id="PS01312">
    <property type="entry name" value="SECA"/>
    <property type="match status" value="1"/>
</dbReference>
<dbReference type="PROSITE" id="PS51196">
    <property type="entry name" value="SECA_MOTOR_DEAD"/>
    <property type="match status" value="1"/>
</dbReference>
<gene>
    <name evidence="1" type="primary">secA1</name>
    <name type="ordered locus">MW0715</name>
</gene>
<protein>
    <recommendedName>
        <fullName evidence="1">Protein translocase subunit SecA 1</fullName>
        <ecNumber evidence="1">7.4.2.8</ecNumber>
    </recommendedName>
</protein>
<feature type="chain" id="PRO_0000109607" description="Protein translocase subunit SecA 1">
    <location>
        <begin position="1"/>
        <end position="843"/>
    </location>
</feature>
<feature type="region of interest" description="Disordered" evidence="2">
    <location>
        <begin position="799"/>
        <end position="826"/>
    </location>
</feature>
<feature type="compositionally biased region" description="Basic and acidic residues" evidence="2">
    <location>
        <begin position="799"/>
        <end position="813"/>
    </location>
</feature>
<feature type="binding site" evidence="1">
    <location>
        <position position="91"/>
    </location>
    <ligand>
        <name>ATP</name>
        <dbReference type="ChEBI" id="CHEBI:30616"/>
    </ligand>
</feature>
<feature type="binding site" evidence="1">
    <location>
        <begin position="109"/>
        <end position="113"/>
    </location>
    <ligand>
        <name>ATP</name>
        <dbReference type="ChEBI" id="CHEBI:30616"/>
    </ligand>
</feature>
<feature type="binding site" evidence="1">
    <location>
        <position position="498"/>
    </location>
    <ligand>
        <name>ATP</name>
        <dbReference type="ChEBI" id="CHEBI:30616"/>
    </ligand>
</feature>
<feature type="binding site" evidence="1">
    <location>
        <position position="829"/>
    </location>
    <ligand>
        <name>Zn(2+)</name>
        <dbReference type="ChEBI" id="CHEBI:29105"/>
    </ligand>
</feature>
<feature type="binding site" evidence="1">
    <location>
        <position position="831"/>
    </location>
    <ligand>
        <name>Zn(2+)</name>
        <dbReference type="ChEBI" id="CHEBI:29105"/>
    </ligand>
</feature>
<feature type="binding site" evidence="1">
    <location>
        <position position="840"/>
    </location>
    <ligand>
        <name>Zn(2+)</name>
        <dbReference type="ChEBI" id="CHEBI:29105"/>
    </ligand>
</feature>
<feature type="binding site" evidence="1">
    <location>
        <position position="841"/>
    </location>
    <ligand>
        <name>Zn(2+)</name>
        <dbReference type="ChEBI" id="CHEBI:29105"/>
    </ligand>
</feature>
<sequence length="843" mass="95960">MGFLSKILDGNNKEIKQLGKLADKVIALEEKTAILTDEEIRNKTKQFQTELADIDNVKKQNDYLDKILPEAYALVREGSKRVFNMTPYKVQIMGGIAIHKGDIAEMRTGEGKTLTATMPTYLNALAGRGVHVITVNEYLSSVQSEEMAELYNFLGLTVGLNLNSKTTEEKREAYAQDITYSTNNELGFDYLRDNMVNYSEDRVMRPLHFAIIDEVDSILIDEARTPLIISGEAEKSTSLYTQANVFAKMLKQDEDYKYDEKTKAVHLTEQGADKAERMFKVENLYDVQNVDVISHINTALRAHVTLQRDVDYMVVDGEVLIVDQFTGRTMPGRRFSEGLHQAIEAKEGVQIQNESKTMASITFQNYFRMYNKLAGMTGTAKTEEEEFRNIYNMTVTQIPTNKPVQRNDKSDLIYISQKGKFDAVVEDVVEKHKAGQPVLLGTVAVETSEYISNLLKKRGIRHDVLNAKNHEREAEIVAGAGQKGAVTIATNMAGRGTDIKLGEGVEELGGLAVIGTERHESRRIDDQLRGRSGRQGDKGDSRFYLSLQDELMIRFGSERLQKMMSRLGLDDSTPIESKMVSRAVESAQKRVEGNNFDARKRILEYDEVLRKQREIIYNERNSIIDEEDSSQVVDAMLRSTLQRSINYYINTADDEPEYQPFIDYINDIFLQEGDITEDDIKGKDAEDIFEVVWAKIEAAYQSQKDILEEQMNEFERMILLRSIDSHWTDHIDTMDQLRQGIHLRSYAQQNPLRDYQNEGHELFDIMMQNIEEDTCKFILKSVVQVEDNIEREKTTEFGEAKHVSAEDGKEKVKPKPIVKGDQVGRNDDCPCGSGKKFKNCHGK</sequence>
<keyword id="KW-0067">ATP-binding</keyword>
<keyword id="KW-1003">Cell membrane</keyword>
<keyword id="KW-0963">Cytoplasm</keyword>
<keyword id="KW-0472">Membrane</keyword>
<keyword id="KW-0479">Metal-binding</keyword>
<keyword id="KW-0547">Nucleotide-binding</keyword>
<keyword id="KW-0653">Protein transport</keyword>
<keyword id="KW-1278">Translocase</keyword>
<keyword id="KW-0811">Translocation</keyword>
<keyword id="KW-0813">Transport</keyword>
<keyword id="KW-0862">Zinc</keyword>
<proteinExistence type="inferred from homology"/>
<organism>
    <name type="scientific">Staphylococcus aureus (strain MW2)</name>
    <dbReference type="NCBI Taxonomy" id="196620"/>
    <lineage>
        <taxon>Bacteria</taxon>
        <taxon>Bacillati</taxon>
        <taxon>Bacillota</taxon>
        <taxon>Bacilli</taxon>
        <taxon>Bacillales</taxon>
        <taxon>Staphylococcaceae</taxon>
        <taxon>Staphylococcus</taxon>
    </lineage>
</organism>